<name>GYRB_NEIGO</name>
<dbReference type="EC" id="5.6.2.2" evidence="1"/>
<dbReference type="EMBL" id="M59981">
    <property type="protein sequence ID" value="AAA88327.1"/>
    <property type="status" value="ALT_SEQ"/>
    <property type="molecule type" value="Genomic_DNA"/>
</dbReference>
<dbReference type="PIR" id="A49794">
    <property type="entry name" value="A49794"/>
</dbReference>
<dbReference type="SMR" id="P22118"/>
<dbReference type="ChEMBL" id="CHEMBL2311244"/>
<dbReference type="DrugCentral" id="P22118"/>
<dbReference type="GO" id="GO:0005694">
    <property type="term" value="C:chromosome"/>
    <property type="evidence" value="ECO:0007669"/>
    <property type="project" value="InterPro"/>
</dbReference>
<dbReference type="GO" id="GO:0005737">
    <property type="term" value="C:cytoplasm"/>
    <property type="evidence" value="ECO:0007669"/>
    <property type="project" value="UniProtKB-SubCell"/>
</dbReference>
<dbReference type="GO" id="GO:0005524">
    <property type="term" value="F:ATP binding"/>
    <property type="evidence" value="ECO:0007669"/>
    <property type="project" value="UniProtKB-UniRule"/>
</dbReference>
<dbReference type="GO" id="GO:0003677">
    <property type="term" value="F:DNA binding"/>
    <property type="evidence" value="ECO:0007669"/>
    <property type="project" value="UniProtKB-KW"/>
</dbReference>
<dbReference type="GO" id="GO:0003918">
    <property type="term" value="F:DNA topoisomerase type II (double strand cut, ATP-hydrolyzing) activity"/>
    <property type="evidence" value="ECO:0007669"/>
    <property type="project" value="UniProtKB-UniRule"/>
</dbReference>
<dbReference type="GO" id="GO:0046872">
    <property type="term" value="F:metal ion binding"/>
    <property type="evidence" value="ECO:0007669"/>
    <property type="project" value="UniProtKB-KW"/>
</dbReference>
<dbReference type="GO" id="GO:0006265">
    <property type="term" value="P:DNA topological change"/>
    <property type="evidence" value="ECO:0007669"/>
    <property type="project" value="UniProtKB-UniRule"/>
</dbReference>
<dbReference type="GO" id="GO:0006261">
    <property type="term" value="P:DNA-templated DNA replication"/>
    <property type="evidence" value="ECO:0007669"/>
    <property type="project" value="UniProtKB-UniRule"/>
</dbReference>
<dbReference type="GO" id="GO:0046677">
    <property type="term" value="P:response to antibiotic"/>
    <property type="evidence" value="ECO:0007669"/>
    <property type="project" value="UniProtKB-KW"/>
</dbReference>
<dbReference type="CDD" id="cd16928">
    <property type="entry name" value="HATPase_GyrB-like"/>
    <property type="match status" value="1"/>
</dbReference>
<dbReference type="CDD" id="cd00822">
    <property type="entry name" value="TopoII_Trans_DNA_gyrase"/>
    <property type="match status" value="1"/>
</dbReference>
<dbReference type="CDD" id="cd03366">
    <property type="entry name" value="TOPRIM_TopoIIA_GyrB"/>
    <property type="match status" value="1"/>
</dbReference>
<dbReference type="FunFam" id="3.30.230.10:FF:000005">
    <property type="entry name" value="DNA gyrase subunit B"/>
    <property type="match status" value="1"/>
</dbReference>
<dbReference type="FunFam" id="3.30.565.10:FF:000002">
    <property type="entry name" value="DNA gyrase subunit B"/>
    <property type="match status" value="1"/>
</dbReference>
<dbReference type="FunFam" id="3.40.50.670:FF:000004">
    <property type="entry name" value="DNA gyrase subunit B"/>
    <property type="match status" value="1"/>
</dbReference>
<dbReference type="FunFam" id="3.40.50.670:FF:000007">
    <property type="entry name" value="DNA gyrase subunit B"/>
    <property type="match status" value="1"/>
</dbReference>
<dbReference type="Gene3D" id="3.30.230.10">
    <property type="match status" value="1"/>
</dbReference>
<dbReference type="Gene3D" id="3.40.50.670">
    <property type="match status" value="2"/>
</dbReference>
<dbReference type="Gene3D" id="3.30.565.10">
    <property type="entry name" value="Histidine kinase-like ATPase, C-terminal domain"/>
    <property type="match status" value="1"/>
</dbReference>
<dbReference type="HAMAP" id="MF_01898">
    <property type="entry name" value="GyrB"/>
    <property type="match status" value="1"/>
</dbReference>
<dbReference type="InterPro" id="IPR002288">
    <property type="entry name" value="DNA_gyrase_B_C"/>
</dbReference>
<dbReference type="InterPro" id="IPR011557">
    <property type="entry name" value="GyrB"/>
</dbReference>
<dbReference type="InterPro" id="IPR049353">
    <property type="entry name" value="GyrB_hook"/>
</dbReference>
<dbReference type="InterPro" id="IPR041423">
    <property type="entry name" value="GyrB_insert"/>
</dbReference>
<dbReference type="InterPro" id="IPR036890">
    <property type="entry name" value="HATPase_C_sf"/>
</dbReference>
<dbReference type="InterPro" id="IPR020568">
    <property type="entry name" value="Ribosomal_Su5_D2-typ_SF"/>
</dbReference>
<dbReference type="InterPro" id="IPR014721">
    <property type="entry name" value="Ribsml_uS5_D2-typ_fold_subgr"/>
</dbReference>
<dbReference type="InterPro" id="IPR001241">
    <property type="entry name" value="Topo_IIA"/>
</dbReference>
<dbReference type="InterPro" id="IPR013760">
    <property type="entry name" value="Topo_IIA-like_dom_sf"/>
</dbReference>
<dbReference type="InterPro" id="IPR000565">
    <property type="entry name" value="Topo_IIA_B"/>
</dbReference>
<dbReference type="InterPro" id="IPR013759">
    <property type="entry name" value="Topo_IIA_B_C"/>
</dbReference>
<dbReference type="InterPro" id="IPR013506">
    <property type="entry name" value="Topo_IIA_bsu_dom2"/>
</dbReference>
<dbReference type="InterPro" id="IPR018522">
    <property type="entry name" value="TopoIIA_CS"/>
</dbReference>
<dbReference type="InterPro" id="IPR006171">
    <property type="entry name" value="TOPRIM_dom"/>
</dbReference>
<dbReference type="InterPro" id="IPR034160">
    <property type="entry name" value="TOPRIM_GyrB"/>
</dbReference>
<dbReference type="NCBIfam" id="TIGR01059">
    <property type="entry name" value="gyrB"/>
    <property type="match status" value="1"/>
</dbReference>
<dbReference type="NCBIfam" id="NF004189">
    <property type="entry name" value="PRK05644.1"/>
    <property type="match status" value="1"/>
</dbReference>
<dbReference type="NCBIfam" id="NF011501">
    <property type="entry name" value="PRK14939.1"/>
    <property type="match status" value="1"/>
</dbReference>
<dbReference type="PANTHER" id="PTHR45866:SF1">
    <property type="entry name" value="DNA GYRASE SUBUNIT B, MITOCHONDRIAL"/>
    <property type="match status" value="1"/>
</dbReference>
<dbReference type="PANTHER" id="PTHR45866">
    <property type="entry name" value="DNA GYRASE/TOPOISOMERASE SUBUNIT B"/>
    <property type="match status" value="1"/>
</dbReference>
<dbReference type="Pfam" id="PF00204">
    <property type="entry name" value="DNA_gyraseB"/>
    <property type="match status" value="1"/>
</dbReference>
<dbReference type="Pfam" id="PF00986">
    <property type="entry name" value="DNA_gyraseB_C"/>
    <property type="match status" value="1"/>
</dbReference>
<dbReference type="Pfam" id="PF21249">
    <property type="entry name" value="GyrB_hook"/>
    <property type="match status" value="1"/>
</dbReference>
<dbReference type="Pfam" id="PF18053">
    <property type="entry name" value="GyrB_insert"/>
    <property type="match status" value="1"/>
</dbReference>
<dbReference type="Pfam" id="PF02518">
    <property type="entry name" value="HATPase_c"/>
    <property type="match status" value="1"/>
</dbReference>
<dbReference type="Pfam" id="PF01751">
    <property type="entry name" value="Toprim"/>
    <property type="match status" value="1"/>
</dbReference>
<dbReference type="PRINTS" id="PR01159">
    <property type="entry name" value="DNAGYRASEB"/>
</dbReference>
<dbReference type="PRINTS" id="PR00418">
    <property type="entry name" value="TPI2FAMILY"/>
</dbReference>
<dbReference type="SMART" id="SM00387">
    <property type="entry name" value="HATPase_c"/>
    <property type="match status" value="1"/>
</dbReference>
<dbReference type="SMART" id="SM00433">
    <property type="entry name" value="TOP2c"/>
    <property type="match status" value="1"/>
</dbReference>
<dbReference type="SUPFAM" id="SSF55874">
    <property type="entry name" value="ATPase domain of HSP90 chaperone/DNA topoisomerase II/histidine kinase"/>
    <property type="match status" value="1"/>
</dbReference>
<dbReference type="SUPFAM" id="SSF54211">
    <property type="entry name" value="Ribosomal protein S5 domain 2-like"/>
    <property type="match status" value="1"/>
</dbReference>
<dbReference type="SUPFAM" id="SSF56719">
    <property type="entry name" value="Type II DNA topoisomerase"/>
    <property type="match status" value="1"/>
</dbReference>
<dbReference type="PROSITE" id="PS00177">
    <property type="entry name" value="TOPOISOMERASE_II"/>
    <property type="match status" value="1"/>
</dbReference>
<dbReference type="PROSITE" id="PS50880">
    <property type="entry name" value="TOPRIM"/>
    <property type="match status" value="1"/>
</dbReference>
<keyword id="KW-0046">Antibiotic resistance</keyword>
<keyword id="KW-0067">ATP-binding</keyword>
<keyword id="KW-0963">Cytoplasm</keyword>
<keyword id="KW-0238">DNA-binding</keyword>
<keyword id="KW-0413">Isomerase</keyword>
<keyword id="KW-0460">Magnesium</keyword>
<keyword id="KW-0479">Metal-binding</keyword>
<keyword id="KW-0547">Nucleotide-binding</keyword>
<keyword id="KW-0799">Topoisomerase</keyword>
<accession>P22118</accession>
<gene>
    <name evidence="1 3" type="primary">gyrB</name>
</gene>
<comment type="function">
    <text evidence="1">A type II topoisomerase that negatively supercoils closed circular double-stranded (ds) DNA in an ATP-dependent manner to modulate DNA topology and maintain chromosomes in an underwound state. Negative supercoiling favors strand separation, and DNA replication, transcription, recombination and repair, all of which involve strand separation. Also able to catalyze the interconversion of other topological isomers of dsDNA rings, including catenanes and knotted rings. Type II topoisomerases break and join 2 DNA strands simultaneously in an ATP-dependent manner.</text>
</comment>
<comment type="catalytic activity">
    <reaction evidence="1">
        <text>ATP-dependent breakage, passage and rejoining of double-stranded DNA.</text>
        <dbReference type="EC" id="5.6.2.2"/>
    </reaction>
</comment>
<comment type="cofactor">
    <cofactor evidence="1">
        <name>Mg(2+)</name>
        <dbReference type="ChEBI" id="CHEBI:18420"/>
    </cofactor>
    <cofactor evidence="1">
        <name>Mn(2+)</name>
        <dbReference type="ChEBI" id="CHEBI:29035"/>
    </cofactor>
    <cofactor evidence="1">
        <name>Ca(2+)</name>
        <dbReference type="ChEBI" id="CHEBI:29108"/>
    </cofactor>
    <text evidence="1">Binds two Mg(2+) per subunit. The magnesium ions form salt bridges with both the protein and the DNA. Can also accept other divalent metal cations, such as Mn(2+) or Ca(2+).</text>
</comment>
<comment type="subunit">
    <text evidence="1">Heterotetramer, composed of two GyrA and two GyrB chains. In the heterotetramer, GyrA contains the active site tyrosine that forms a transient covalent intermediate with DNA, while GyrB binds cofactors and catalyzes ATP hydrolysis.</text>
</comment>
<comment type="subcellular location">
    <subcellularLocation>
        <location evidence="1">Cytoplasm</location>
    </subcellularLocation>
</comment>
<comment type="miscellaneous">
    <text evidence="1">Few gyrases are as efficient as E.coli at forming negative supercoils. Not all organisms have 2 type II topoisomerases; in organisms with a single type II topoisomerase this enzyme also has to decatenate newly replicated chromosomes.</text>
</comment>
<comment type="similarity">
    <text evidence="1">Belongs to the type II topoisomerase GyrB family.</text>
</comment>
<comment type="caution">
    <text evidence="2 5">This gene confers 4-fold increased resistance to nalidixic acid (MIC 2 ug/ml) when expressed in susceptible N.gonorrhoeae strains (PubMed:1906260). The exact mutation responsible for resistance was not identified; later analysis suggests it is probably Asn-429 which is usually Asp. Asn-429 confers resistance to AZD0914 and ciprofloxacin.</text>
</comment>
<comment type="sequence caution" evidence="4">
    <conflict type="miscellaneous discrepancy">
        <sequence resource="EMBL-CDS" id="AAA88327"/>
    </conflict>
    <text>Very strange deletion of 14 amino acids, when compared to other Neisseria gyrB sequences, that looks like a sequencing error.</text>
</comment>
<feature type="chain" id="PRO_0000145327" description="Antibiotic resistant DNA gyrase subunit B">
    <location>
        <begin position="1"/>
        <end position="795"/>
    </location>
</feature>
<feature type="domain" description="Toprim" evidence="1">
    <location>
        <begin position="421"/>
        <end position="536"/>
    </location>
</feature>
<feature type="binding site" evidence="1">
    <location>
        <position position="427"/>
    </location>
    <ligand>
        <name>Mg(2+)</name>
        <dbReference type="ChEBI" id="CHEBI:18420"/>
        <label>1</label>
        <note>catalytic</note>
    </ligand>
</feature>
<feature type="binding site" evidence="1">
    <location>
        <position position="501"/>
    </location>
    <ligand>
        <name>Mg(2+)</name>
        <dbReference type="ChEBI" id="CHEBI:18420"/>
        <label>1</label>
        <note>catalytic</note>
    </ligand>
</feature>
<feature type="binding site" evidence="1">
    <location>
        <position position="501"/>
    </location>
    <ligand>
        <name>Mg(2+)</name>
        <dbReference type="ChEBI" id="CHEBI:18420"/>
        <label>2</label>
    </ligand>
</feature>
<feature type="binding site" evidence="1">
    <location>
        <position position="503"/>
    </location>
    <ligand>
        <name>Mg(2+)</name>
        <dbReference type="ChEBI" id="CHEBI:18420"/>
        <label>2</label>
    </ligand>
</feature>
<feature type="site" description="Probably responsible for antibiotic resistance" evidence="5">
    <location>
        <position position="429"/>
    </location>
</feature>
<feature type="site" description="Interaction with DNA" evidence="1">
    <location>
        <position position="452"/>
    </location>
</feature>
<feature type="site" description="Interaction with DNA" evidence="1">
    <location>
        <position position="455"/>
    </location>
</feature>
<sequence length="795" mass="88164">MTEQKHEEYGADSIQVLEGLEAVPKRPGMYIGDTQDGSGLHHMVFEVLDNAIDEALAGHCDKITVTIHADHSVSVADNGRGMPTGIHPKEGRSAAEVIMTVLHAGGKFDNNSYKISGGLHGVGVSVVNALSDWVTLTIYRDGKEHFVRFVRGETEEPLKIVGDSDKKGTTVRFLAGTETFGNIEYSFDILAKRIRELSFLNNGVDIELTDERDGKHESFALSGGVAGFVQYMNRKKTPLHEKIFYAFGEKDGMSVECAMQWNDSYQESVQCFTNNIPQRDGGTHLTALRQVMTRTINSYIEANEVAKKAKVETAGDDMREGLTCVLSVKLPDPKFSSQTKDKLVSGEIGPVVNEVINQALTDFLEENPNEAKIITGKIVDAARARQAARKAREITRRKGLMDGLGLPGKLADCQEKDPALSELYLVEGNSAGGSAMQGRDRKFQAILPLKGKILNVEKARFEKMLASQEVATLITALGAGIGKEEFNPEKLRYHRIIIMTDADVDGAHIRTLLLTFFYRQMPDLVERGYIYIAQPPLYKAKYGKQERYLKDELEKDQWLLGLALEKAKIVSDGRTIEGAELADTAKQFLLAKTVIEQESRFVDELVLRAMLHASPIDLTSSENADKAVAELSGLLDEKEAALERIEGHEGHQFIKITRKLHGNVMVSYIEPKFLNSKAYQTLTQTAAALKGLVGEGAKLYKGENEYDADSFETALDILMSVAQKGMSIQRYKGLGEMNPEQLWETTMDPTVRRLLKVRIEDRIADEVFVTLMGDEVEPRRAFIENNALIAQNIDA</sequence>
<evidence type="ECO:0000255" key="1">
    <source>
        <dbReference type="HAMAP-Rule" id="MF_01898"/>
    </source>
</evidence>
<evidence type="ECO:0000269" key="2">
    <source>
    </source>
</evidence>
<evidence type="ECO:0000303" key="3">
    <source>
    </source>
</evidence>
<evidence type="ECO:0000305" key="4"/>
<evidence type="ECO:0000305" key="5">
    <source>
    </source>
</evidence>
<organism>
    <name type="scientific">Neisseria gonorrhoeae</name>
    <dbReference type="NCBI Taxonomy" id="485"/>
    <lineage>
        <taxon>Bacteria</taxon>
        <taxon>Pseudomonadati</taxon>
        <taxon>Pseudomonadota</taxon>
        <taxon>Betaproteobacteria</taxon>
        <taxon>Neisseriales</taxon>
        <taxon>Neisseriaceae</taxon>
        <taxon>Neisseria</taxon>
    </lineage>
</organism>
<protein>
    <recommendedName>
        <fullName evidence="3">Antibiotic resistant DNA gyrase subunit B</fullName>
        <ecNumber evidence="1">5.6.2.2</ecNumber>
    </recommendedName>
</protein>
<proteinExistence type="inferred from homology"/>
<reference key="1">
    <citation type="journal article" date="1991" name="Antimicrob. Agents Chemother.">
        <title>Characterization of a gyrB mutation responsible for low-level nalidixic acid resistance in Neisseria gonorrhoeae.</title>
        <authorList>
            <person name="Stein D.C."/>
            <person name="Danaher R.J."/>
            <person name="Cook T.M."/>
        </authorList>
    </citation>
    <scope>NUCLEOTIDE SEQUENCE [GENOMIC DNA]</scope>
    <scope>ANTIBIOTIC RESISTANCE</scope>
    <source>
        <strain>WR302 / MUG116</strain>
    </source>
</reference>
<reference key="2">
    <citation type="journal article" date="2015" name="Antimicrob. Agents Chemother.">
        <title>Characterization of the novel DNA gyrase inhibitor AZD0914: low resistance potential and lack of cross-resistance in Neisseria gonorrhoeae.</title>
        <authorList>
            <person name="Alm R.A."/>
            <person name="Lahiri S.D."/>
            <person name="Kutschke A."/>
            <person name="Otterson L.G."/>
            <person name="McLaughlin R.E."/>
            <person name="Whiteaker J.D."/>
            <person name="Lewis L.A."/>
            <person name="Su X."/>
            <person name="Huband M.D."/>
            <person name="Gardner H."/>
            <person name="Mueller J.P."/>
        </authorList>
    </citation>
    <scope>PROBABLE ANTIBIOTIC RESISTANT MUTATION</scope>
    <source>
        <strain>ARC4682</strain>
    </source>
</reference>